<name>THIE_ACIF2</name>
<keyword id="KW-0460">Magnesium</keyword>
<keyword id="KW-0479">Metal-binding</keyword>
<keyword id="KW-1185">Reference proteome</keyword>
<keyword id="KW-0784">Thiamine biosynthesis</keyword>
<keyword id="KW-0808">Transferase</keyword>
<accession>B7JBI2</accession>
<organism>
    <name type="scientific">Acidithiobacillus ferrooxidans (strain ATCC 23270 / DSM 14882 / CIP 104768 / NCIMB 8455)</name>
    <name type="common">Ferrobacillus ferrooxidans (strain ATCC 23270)</name>
    <dbReference type="NCBI Taxonomy" id="243159"/>
    <lineage>
        <taxon>Bacteria</taxon>
        <taxon>Pseudomonadati</taxon>
        <taxon>Pseudomonadota</taxon>
        <taxon>Acidithiobacillia</taxon>
        <taxon>Acidithiobacillales</taxon>
        <taxon>Acidithiobacillaceae</taxon>
        <taxon>Acidithiobacillus</taxon>
    </lineage>
</organism>
<evidence type="ECO:0000255" key="1">
    <source>
        <dbReference type="HAMAP-Rule" id="MF_00097"/>
    </source>
</evidence>
<dbReference type="EC" id="2.5.1.3" evidence="1"/>
<dbReference type="EMBL" id="CP001219">
    <property type="protein sequence ID" value="ACK79913.1"/>
    <property type="molecule type" value="Genomic_DNA"/>
</dbReference>
<dbReference type="RefSeq" id="WP_009566482.1">
    <property type="nucleotide sequence ID" value="NC_011761.1"/>
</dbReference>
<dbReference type="SMR" id="B7JBI2"/>
<dbReference type="STRING" id="243159.AFE_3304"/>
<dbReference type="PaxDb" id="243159-AFE_3304"/>
<dbReference type="GeneID" id="65282281"/>
<dbReference type="KEGG" id="afr:AFE_3304"/>
<dbReference type="eggNOG" id="COG0352">
    <property type="taxonomic scope" value="Bacteria"/>
</dbReference>
<dbReference type="HOGENOM" id="CLU_018272_3_1_6"/>
<dbReference type="UniPathway" id="UPA00060">
    <property type="reaction ID" value="UER00141"/>
</dbReference>
<dbReference type="Proteomes" id="UP000001362">
    <property type="component" value="Chromosome"/>
</dbReference>
<dbReference type="GO" id="GO:0005737">
    <property type="term" value="C:cytoplasm"/>
    <property type="evidence" value="ECO:0007669"/>
    <property type="project" value="TreeGrafter"/>
</dbReference>
<dbReference type="GO" id="GO:0000287">
    <property type="term" value="F:magnesium ion binding"/>
    <property type="evidence" value="ECO:0007669"/>
    <property type="project" value="UniProtKB-UniRule"/>
</dbReference>
<dbReference type="GO" id="GO:0004789">
    <property type="term" value="F:thiamine-phosphate diphosphorylase activity"/>
    <property type="evidence" value="ECO:0007669"/>
    <property type="project" value="UniProtKB-UniRule"/>
</dbReference>
<dbReference type="GO" id="GO:0009228">
    <property type="term" value="P:thiamine biosynthetic process"/>
    <property type="evidence" value="ECO:0007669"/>
    <property type="project" value="UniProtKB-KW"/>
</dbReference>
<dbReference type="GO" id="GO:0009229">
    <property type="term" value="P:thiamine diphosphate biosynthetic process"/>
    <property type="evidence" value="ECO:0007669"/>
    <property type="project" value="UniProtKB-UniRule"/>
</dbReference>
<dbReference type="CDD" id="cd00564">
    <property type="entry name" value="TMP_TenI"/>
    <property type="match status" value="1"/>
</dbReference>
<dbReference type="Gene3D" id="3.20.20.70">
    <property type="entry name" value="Aldolase class I"/>
    <property type="match status" value="1"/>
</dbReference>
<dbReference type="HAMAP" id="MF_00097">
    <property type="entry name" value="TMP_synthase"/>
    <property type="match status" value="1"/>
</dbReference>
<dbReference type="InterPro" id="IPR013785">
    <property type="entry name" value="Aldolase_TIM"/>
</dbReference>
<dbReference type="InterPro" id="IPR036206">
    <property type="entry name" value="ThiamineP_synth_sf"/>
</dbReference>
<dbReference type="InterPro" id="IPR022998">
    <property type="entry name" value="ThiamineP_synth_TenI"/>
</dbReference>
<dbReference type="InterPro" id="IPR034291">
    <property type="entry name" value="TMP_synthase"/>
</dbReference>
<dbReference type="NCBIfam" id="TIGR00693">
    <property type="entry name" value="thiE"/>
    <property type="match status" value="1"/>
</dbReference>
<dbReference type="PANTHER" id="PTHR20857">
    <property type="entry name" value="THIAMINE-PHOSPHATE PYROPHOSPHORYLASE"/>
    <property type="match status" value="1"/>
</dbReference>
<dbReference type="PANTHER" id="PTHR20857:SF15">
    <property type="entry name" value="THIAMINE-PHOSPHATE SYNTHASE"/>
    <property type="match status" value="1"/>
</dbReference>
<dbReference type="Pfam" id="PF02581">
    <property type="entry name" value="TMP-TENI"/>
    <property type="match status" value="1"/>
</dbReference>
<dbReference type="SUPFAM" id="SSF51391">
    <property type="entry name" value="Thiamin phosphate synthase"/>
    <property type="match status" value="1"/>
</dbReference>
<feature type="chain" id="PRO_1000117293" description="Thiamine-phosphate synthase">
    <location>
        <begin position="1"/>
        <end position="217"/>
    </location>
</feature>
<feature type="binding site" evidence="1">
    <location>
        <begin position="41"/>
        <end position="45"/>
    </location>
    <ligand>
        <name>4-amino-2-methyl-5-(diphosphooxymethyl)pyrimidine</name>
        <dbReference type="ChEBI" id="CHEBI:57841"/>
    </ligand>
</feature>
<feature type="binding site" evidence="1">
    <location>
        <position position="76"/>
    </location>
    <ligand>
        <name>4-amino-2-methyl-5-(diphosphooxymethyl)pyrimidine</name>
        <dbReference type="ChEBI" id="CHEBI:57841"/>
    </ligand>
</feature>
<feature type="binding site" evidence="1">
    <location>
        <position position="77"/>
    </location>
    <ligand>
        <name>Mg(2+)</name>
        <dbReference type="ChEBI" id="CHEBI:18420"/>
    </ligand>
</feature>
<feature type="binding site" evidence="1">
    <location>
        <position position="96"/>
    </location>
    <ligand>
        <name>Mg(2+)</name>
        <dbReference type="ChEBI" id="CHEBI:18420"/>
    </ligand>
</feature>
<feature type="binding site" evidence="1">
    <location>
        <position position="115"/>
    </location>
    <ligand>
        <name>4-amino-2-methyl-5-(diphosphooxymethyl)pyrimidine</name>
        <dbReference type="ChEBI" id="CHEBI:57841"/>
    </ligand>
</feature>
<feature type="binding site" evidence="1">
    <location>
        <begin position="142"/>
        <end position="144"/>
    </location>
    <ligand>
        <name>2-[(2R,5Z)-2-carboxy-4-methylthiazol-5(2H)-ylidene]ethyl phosphate</name>
        <dbReference type="ChEBI" id="CHEBI:62899"/>
    </ligand>
</feature>
<feature type="binding site" evidence="1">
    <location>
        <position position="145"/>
    </location>
    <ligand>
        <name>4-amino-2-methyl-5-(diphosphooxymethyl)pyrimidine</name>
        <dbReference type="ChEBI" id="CHEBI:57841"/>
    </ligand>
</feature>
<feature type="binding site" evidence="1">
    <location>
        <position position="172"/>
    </location>
    <ligand>
        <name>2-[(2R,5Z)-2-carboxy-4-methylthiazol-5(2H)-ylidene]ethyl phosphate</name>
        <dbReference type="ChEBI" id="CHEBI:62899"/>
    </ligand>
</feature>
<feature type="binding site" evidence="1">
    <location>
        <begin position="192"/>
        <end position="193"/>
    </location>
    <ligand>
        <name>2-[(2R,5Z)-2-carboxy-4-methylthiazol-5(2H)-ylidene]ethyl phosphate</name>
        <dbReference type="ChEBI" id="CHEBI:62899"/>
    </ligand>
</feature>
<comment type="function">
    <text evidence="1">Condenses 4-methyl-5-(beta-hydroxyethyl)thiazole monophosphate (THZ-P) and 2-methyl-4-amino-5-hydroxymethyl pyrimidine pyrophosphate (HMP-PP) to form thiamine monophosphate (TMP).</text>
</comment>
<comment type="catalytic activity">
    <reaction evidence="1">
        <text>2-[(2R,5Z)-2-carboxy-4-methylthiazol-5(2H)-ylidene]ethyl phosphate + 4-amino-2-methyl-5-(diphosphooxymethyl)pyrimidine + 2 H(+) = thiamine phosphate + CO2 + diphosphate</text>
        <dbReference type="Rhea" id="RHEA:47844"/>
        <dbReference type="ChEBI" id="CHEBI:15378"/>
        <dbReference type="ChEBI" id="CHEBI:16526"/>
        <dbReference type="ChEBI" id="CHEBI:33019"/>
        <dbReference type="ChEBI" id="CHEBI:37575"/>
        <dbReference type="ChEBI" id="CHEBI:57841"/>
        <dbReference type="ChEBI" id="CHEBI:62899"/>
        <dbReference type="EC" id="2.5.1.3"/>
    </reaction>
</comment>
<comment type="catalytic activity">
    <reaction evidence="1">
        <text>2-(2-carboxy-4-methylthiazol-5-yl)ethyl phosphate + 4-amino-2-methyl-5-(diphosphooxymethyl)pyrimidine + 2 H(+) = thiamine phosphate + CO2 + diphosphate</text>
        <dbReference type="Rhea" id="RHEA:47848"/>
        <dbReference type="ChEBI" id="CHEBI:15378"/>
        <dbReference type="ChEBI" id="CHEBI:16526"/>
        <dbReference type="ChEBI" id="CHEBI:33019"/>
        <dbReference type="ChEBI" id="CHEBI:37575"/>
        <dbReference type="ChEBI" id="CHEBI:57841"/>
        <dbReference type="ChEBI" id="CHEBI:62890"/>
        <dbReference type="EC" id="2.5.1.3"/>
    </reaction>
</comment>
<comment type="catalytic activity">
    <reaction evidence="1">
        <text>4-methyl-5-(2-phosphooxyethyl)-thiazole + 4-amino-2-methyl-5-(diphosphooxymethyl)pyrimidine + H(+) = thiamine phosphate + diphosphate</text>
        <dbReference type="Rhea" id="RHEA:22328"/>
        <dbReference type="ChEBI" id="CHEBI:15378"/>
        <dbReference type="ChEBI" id="CHEBI:33019"/>
        <dbReference type="ChEBI" id="CHEBI:37575"/>
        <dbReference type="ChEBI" id="CHEBI:57841"/>
        <dbReference type="ChEBI" id="CHEBI:58296"/>
        <dbReference type="EC" id="2.5.1.3"/>
    </reaction>
</comment>
<comment type="cofactor">
    <cofactor evidence="1">
        <name>Mg(2+)</name>
        <dbReference type="ChEBI" id="CHEBI:18420"/>
    </cofactor>
    <text evidence="1">Binds 1 Mg(2+) ion per subunit.</text>
</comment>
<comment type="pathway">
    <text evidence="1">Cofactor biosynthesis; thiamine diphosphate biosynthesis; thiamine phosphate from 4-amino-2-methyl-5-diphosphomethylpyrimidine and 4-methyl-5-(2-phosphoethyl)-thiazole: step 1/1.</text>
</comment>
<comment type="similarity">
    <text evidence="1">Belongs to the thiamine-phosphate synthase family.</text>
</comment>
<protein>
    <recommendedName>
        <fullName evidence="1">Thiamine-phosphate synthase</fullName>
        <shortName evidence="1">TP synthase</shortName>
        <shortName evidence="1">TPS</shortName>
        <ecNumber evidence="1">2.5.1.3</ecNumber>
    </recommendedName>
    <alternativeName>
        <fullName evidence="1">Thiamine-phosphate pyrophosphorylase</fullName>
        <shortName evidence="1">TMP pyrophosphorylase</shortName>
        <shortName evidence="1">TMP-PPase</shortName>
    </alternativeName>
</protein>
<sequence>MAGDDHLISGLYAITDAHLMPEPVFLARAEAALRGGARILQYRDKGDVVTDARRRRMQAGALRELCAQYGALFVVNDDPRLARVVGAPALHVGAEDAPPAALRAQFGRAILIGVSCYGSVPQAQEAATQGADYVAFGSFFASPSKPQAPVVSVDVLTAARAMIDLPIVAIGGITEANGRALIAAGADALAVISGVFAAEDVEGAARRFTALFNNRKE</sequence>
<proteinExistence type="inferred from homology"/>
<reference key="1">
    <citation type="journal article" date="2008" name="BMC Genomics">
        <title>Acidithiobacillus ferrooxidans metabolism: from genome sequence to industrial applications.</title>
        <authorList>
            <person name="Valdes J."/>
            <person name="Pedroso I."/>
            <person name="Quatrini R."/>
            <person name="Dodson R.J."/>
            <person name="Tettelin H."/>
            <person name="Blake R. II"/>
            <person name="Eisen J.A."/>
            <person name="Holmes D.S."/>
        </authorList>
    </citation>
    <scope>NUCLEOTIDE SEQUENCE [LARGE SCALE GENOMIC DNA]</scope>
    <source>
        <strain>ATCC 23270 / DSM 14882 / CIP 104768 / NCIMB 8455</strain>
    </source>
</reference>
<gene>
    <name evidence="1" type="primary">thiE</name>
    <name type="ordered locus">AFE_3304</name>
</gene>